<organism>
    <name type="scientific">Colwellia psychrerythraea (strain 34H / ATCC BAA-681)</name>
    <name type="common">Vibrio psychroerythus</name>
    <dbReference type="NCBI Taxonomy" id="167879"/>
    <lineage>
        <taxon>Bacteria</taxon>
        <taxon>Pseudomonadati</taxon>
        <taxon>Pseudomonadota</taxon>
        <taxon>Gammaproteobacteria</taxon>
        <taxon>Alteromonadales</taxon>
        <taxon>Colwelliaceae</taxon>
        <taxon>Colwellia</taxon>
    </lineage>
</organism>
<accession>Q48AC6</accession>
<keyword id="KW-0004">4Fe-4S</keyword>
<keyword id="KW-0408">Iron</keyword>
<keyword id="KW-0411">Iron-sulfur</keyword>
<keyword id="KW-0479">Metal-binding</keyword>
<sequence>MITISENAQQHFIKLLSQQAEGTHIRVFVVNPGTAKAECGVSYCPPDAVEADDIQLPFEGFSAMVDADSKGFLEDAEIDFTTDQMGSQLTLKAPNAKLRKVADDAPLFERVHYFLQAEVNPQLAGHGGECTLVEITDDGYAVLQFGGGCNGCAQIDVTVKDGIEKQLIELMAGEIKGVKDATEHERGDHSYY</sequence>
<evidence type="ECO:0000255" key="1">
    <source>
        <dbReference type="HAMAP-Rule" id="MF_01637"/>
    </source>
</evidence>
<reference key="1">
    <citation type="journal article" date="2005" name="Proc. Natl. Acad. Sci. U.S.A.">
        <title>The psychrophilic lifestyle as revealed by the genome sequence of Colwellia psychrerythraea 34H through genomic and proteomic analyses.</title>
        <authorList>
            <person name="Methe B.A."/>
            <person name="Nelson K.E."/>
            <person name="Deming J.W."/>
            <person name="Momen B."/>
            <person name="Melamud E."/>
            <person name="Zhang X."/>
            <person name="Moult J."/>
            <person name="Madupu R."/>
            <person name="Nelson W.C."/>
            <person name="Dodson R.J."/>
            <person name="Brinkac L.M."/>
            <person name="Daugherty S.C."/>
            <person name="Durkin A.S."/>
            <person name="DeBoy R.T."/>
            <person name="Kolonay J.F."/>
            <person name="Sullivan S.A."/>
            <person name="Zhou L."/>
            <person name="Davidsen T.M."/>
            <person name="Wu M."/>
            <person name="Huston A.L."/>
            <person name="Lewis M."/>
            <person name="Weaver B."/>
            <person name="Weidman J.F."/>
            <person name="Khouri H."/>
            <person name="Utterback T.R."/>
            <person name="Feldblyum T.V."/>
            <person name="Fraser C.M."/>
        </authorList>
    </citation>
    <scope>NUCLEOTIDE SEQUENCE [LARGE SCALE GENOMIC DNA]</scope>
    <source>
        <strain>34H / ATCC BAA-681</strain>
    </source>
</reference>
<dbReference type="EMBL" id="CP000083">
    <property type="protein sequence ID" value="AAZ24833.1"/>
    <property type="molecule type" value="Genomic_DNA"/>
</dbReference>
<dbReference type="RefSeq" id="WP_011041094.1">
    <property type="nucleotide sequence ID" value="NC_003910.7"/>
</dbReference>
<dbReference type="SMR" id="Q48AC6"/>
<dbReference type="STRING" id="167879.CPS_0220"/>
<dbReference type="KEGG" id="cps:CPS_0220"/>
<dbReference type="eggNOG" id="COG0316">
    <property type="taxonomic scope" value="Bacteria"/>
</dbReference>
<dbReference type="eggNOG" id="COG0694">
    <property type="taxonomic scope" value="Bacteria"/>
</dbReference>
<dbReference type="HOGENOM" id="CLU_094569_0_0_6"/>
<dbReference type="Proteomes" id="UP000000547">
    <property type="component" value="Chromosome"/>
</dbReference>
<dbReference type="GO" id="GO:0051539">
    <property type="term" value="F:4 iron, 4 sulfur cluster binding"/>
    <property type="evidence" value="ECO:0007669"/>
    <property type="project" value="UniProtKB-UniRule"/>
</dbReference>
<dbReference type="GO" id="GO:0005506">
    <property type="term" value="F:iron ion binding"/>
    <property type="evidence" value="ECO:0007669"/>
    <property type="project" value="InterPro"/>
</dbReference>
<dbReference type="GO" id="GO:0016226">
    <property type="term" value="P:iron-sulfur cluster assembly"/>
    <property type="evidence" value="ECO:0007669"/>
    <property type="project" value="UniProtKB-UniRule"/>
</dbReference>
<dbReference type="GO" id="GO:0051604">
    <property type="term" value="P:protein maturation"/>
    <property type="evidence" value="ECO:0007669"/>
    <property type="project" value="UniProtKB-UniRule"/>
</dbReference>
<dbReference type="Gene3D" id="3.30.300.130">
    <property type="entry name" value="Fe-S cluster assembly (FSCA)"/>
    <property type="match status" value="1"/>
</dbReference>
<dbReference type="Gene3D" id="2.60.300.12">
    <property type="entry name" value="HesB-like domain"/>
    <property type="match status" value="1"/>
</dbReference>
<dbReference type="HAMAP" id="MF_01637">
    <property type="entry name" value="Fe_S_biogen_NfuA"/>
    <property type="match status" value="1"/>
</dbReference>
<dbReference type="InterPro" id="IPR017726">
    <property type="entry name" value="Fe/S_biogenesis_protein_NfuA"/>
</dbReference>
<dbReference type="InterPro" id="IPR000361">
    <property type="entry name" value="FeS_biogenesis"/>
</dbReference>
<dbReference type="InterPro" id="IPR034904">
    <property type="entry name" value="FSCA_dom_sf"/>
</dbReference>
<dbReference type="InterPro" id="IPR035903">
    <property type="entry name" value="HesB-like_dom_sf"/>
</dbReference>
<dbReference type="InterPro" id="IPR001075">
    <property type="entry name" value="NIF_FeS_clus_asmbl_NifU_C"/>
</dbReference>
<dbReference type="NCBIfam" id="NF008392">
    <property type="entry name" value="PRK11190.1"/>
    <property type="match status" value="1"/>
</dbReference>
<dbReference type="NCBIfam" id="TIGR03341">
    <property type="entry name" value="YhgI_GntY"/>
    <property type="match status" value="1"/>
</dbReference>
<dbReference type="PANTHER" id="PTHR11178:SF51">
    <property type="entry name" value="FE_S BIOGENESIS PROTEIN NFUA"/>
    <property type="match status" value="1"/>
</dbReference>
<dbReference type="PANTHER" id="PTHR11178">
    <property type="entry name" value="IRON-SULFUR CLUSTER SCAFFOLD PROTEIN NFU-RELATED"/>
    <property type="match status" value="1"/>
</dbReference>
<dbReference type="Pfam" id="PF01521">
    <property type="entry name" value="Fe-S_biosyn"/>
    <property type="match status" value="1"/>
</dbReference>
<dbReference type="Pfam" id="PF01106">
    <property type="entry name" value="NifU"/>
    <property type="match status" value="1"/>
</dbReference>
<dbReference type="SUPFAM" id="SSF117916">
    <property type="entry name" value="Fe-S cluster assembly (FSCA) domain-like"/>
    <property type="match status" value="1"/>
</dbReference>
<dbReference type="SUPFAM" id="SSF89360">
    <property type="entry name" value="HesB-like domain"/>
    <property type="match status" value="1"/>
</dbReference>
<gene>
    <name evidence="1" type="primary">nfuA</name>
    <name type="ordered locus">CPS_0220</name>
</gene>
<comment type="function">
    <text evidence="1">Involved in iron-sulfur cluster biogenesis. Binds a 4Fe-4S cluster, can transfer this cluster to apoproteins, and thereby intervenes in the maturation of Fe/S proteins. Could also act as a scaffold/chaperone for damaged Fe/S proteins.</text>
</comment>
<comment type="cofactor">
    <cofactor evidence="1">
        <name>[4Fe-4S] cluster</name>
        <dbReference type="ChEBI" id="CHEBI:49883"/>
    </cofactor>
    <text evidence="1">Binds 1 [4Fe-4S] cluster per subunit. The cluster is presumably bound at the interface of two monomers.</text>
</comment>
<comment type="subunit">
    <text evidence="1">Homodimer.</text>
</comment>
<comment type="similarity">
    <text evidence="1">Belongs to the NfuA family.</text>
</comment>
<protein>
    <recommendedName>
        <fullName evidence="1">Fe/S biogenesis protein NfuA</fullName>
    </recommendedName>
</protein>
<proteinExistence type="inferred from homology"/>
<name>NFUA_COLP3</name>
<feature type="chain" id="PRO_0000268227" description="Fe/S biogenesis protein NfuA">
    <location>
        <begin position="1"/>
        <end position="192"/>
    </location>
</feature>
<feature type="binding site" evidence="1">
    <location>
        <position position="149"/>
    </location>
    <ligand>
        <name>[4Fe-4S] cluster</name>
        <dbReference type="ChEBI" id="CHEBI:49883"/>
    </ligand>
</feature>
<feature type="binding site" evidence="1">
    <location>
        <position position="152"/>
    </location>
    <ligand>
        <name>[4Fe-4S] cluster</name>
        <dbReference type="ChEBI" id="CHEBI:49883"/>
    </ligand>
</feature>